<reference key="1">
    <citation type="submission" date="2007-04" db="EMBL/GenBank/DDBJ databases">
        <title>Complete genome sequence of the nitrogen-fixing bacterium Azorhizobium caulinodans ORS571.</title>
        <authorList>
            <person name="Lee K.B."/>
            <person name="Backer P.D."/>
            <person name="Aono T."/>
            <person name="Liu C.T."/>
            <person name="Suzuki S."/>
            <person name="Suzuki T."/>
            <person name="Kaneko T."/>
            <person name="Yamada M."/>
            <person name="Tabata S."/>
            <person name="Kupfer D.M."/>
            <person name="Najar F.Z."/>
            <person name="Wiley G.B."/>
            <person name="Roe B."/>
            <person name="Binnewies T."/>
            <person name="Ussery D."/>
            <person name="Vereecke D."/>
            <person name="Gevers D."/>
            <person name="Holsters M."/>
            <person name="Oyaizu H."/>
        </authorList>
    </citation>
    <scope>NUCLEOTIDE SEQUENCE [LARGE SCALE GENOMIC DNA]</scope>
    <source>
        <strain>ATCC 43989 / DSM 5975 / JCM 20966 / LMG 6465 / NBRC 14845 / NCIMB 13405 / ORS 571</strain>
    </source>
</reference>
<sequence length="321" mass="34480">MAVYTDVSAASLSDYLAAYDIGTLVSYHGIAEGVENSNFLVQTTTASFILTLYEKRVDPADLPFFIGLMQHLAANGISCPQPVAMRDGTMLGTLAGRPCAIVTFLPGVSVRKPTAANCGQLGRALAQLHLAGAGFEITRRNALSVSGWRPLFEAAGPRTDTVHPGLAAIITEELAAHEAHWPAALPAGVIHADLFPDNAFFLDDTLSGIIDFYFACNDLFAYDVAVCLNAWCFEADGAFNATKGRALLAGYQAVRPMEAAEVEALPQLARGAALRFLLTRLVDWLNVPEGALVRPKDPLEYLRKLRFHRAVASARDYGLAA</sequence>
<keyword id="KW-0028">Amino-acid biosynthesis</keyword>
<keyword id="KW-0067">ATP-binding</keyword>
<keyword id="KW-0418">Kinase</keyword>
<keyword id="KW-0547">Nucleotide-binding</keyword>
<keyword id="KW-1185">Reference proteome</keyword>
<keyword id="KW-0791">Threonine biosynthesis</keyword>
<keyword id="KW-0808">Transferase</keyword>
<protein>
    <recommendedName>
        <fullName evidence="1">Homoserine kinase</fullName>
        <shortName evidence="1">HK</shortName>
        <shortName evidence="1">HSK</shortName>
        <ecNumber evidence="1">2.7.1.39</ecNumber>
    </recommendedName>
</protein>
<accession>A8HX69</accession>
<gene>
    <name evidence="1" type="primary">thrB</name>
    <name type="ordered locus">AZC_1467</name>
</gene>
<dbReference type="EC" id="2.7.1.39" evidence="1"/>
<dbReference type="EMBL" id="AP009384">
    <property type="protein sequence ID" value="BAF87465.1"/>
    <property type="molecule type" value="Genomic_DNA"/>
</dbReference>
<dbReference type="RefSeq" id="WP_012169995.1">
    <property type="nucleotide sequence ID" value="NC_009937.1"/>
</dbReference>
<dbReference type="SMR" id="A8HX69"/>
<dbReference type="STRING" id="438753.AZC_1467"/>
<dbReference type="KEGG" id="azc:AZC_1467"/>
<dbReference type="eggNOG" id="COG2334">
    <property type="taxonomic scope" value="Bacteria"/>
</dbReference>
<dbReference type="HOGENOM" id="CLU_053300_1_0_5"/>
<dbReference type="UniPathway" id="UPA00050">
    <property type="reaction ID" value="UER00064"/>
</dbReference>
<dbReference type="Proteomes" id="UP000000270">
    <property type="component" value="Chromosome"/>
</dbReference>
<dbReference type="GO" id="GO:0005524">
    <property type="term" value="F:ATP binding"/>
    <property type="evidence" value="ECO:0007669"/>
    <property type="project" value="UniProtKB-KW"/>
</dbReference>
<dbReference type="GO" id="GO:0004413">
    <property type="term" value="F:homoserine kinase activity"/>
    <property type="evidence" value="ECO:0007669"/>
    <property type="project" value="UniProtKB-UniRule"/>
</dbReference>
<dbReference type="GO" id="GO:0009088">
    <property type="term" value="P:threonine biosynthetic process"/>
    <property type="evidence" value="ECO:0007669"/>
    <property type="project" value="UniProtKB-UniRule"/>
</dbReference>
<dbReference type="CDD" id="cd05153">
    <property type="entry name" value="HomoserineK_II"/>
    <property type="match status" value="1"/>
</dbReference>
<dbReference type="Gene3D" id="3.90.1200.10">
    <property type="match status" value="1"/>
</dbReference>
<dbReference type="Gene3D" id="3.30.200.20">
    <property type="entry name" value="Phosphorylase Kinase, domain 1"/>
    <property type="match status" value="1"/>
</dbReference>
<dbReference type="HAMAP" id="MF_00301">
    <property type="entry name" value="Homoser_kinase_2"/>
    <property type="match status" value="1"/>
</dbReference>
<dbReference type="InterPro" id="IPR002575">
    <property type="entry name" value="Aminoglycoside_PTrfase"/>
</dbReference>
<dbReference type="InterPro" id="IPR005280">
    <property type="entry name" value="Homoserine_kinase_II"/>
</dbReference>
<dbReference type="InterPro" id="IPR011009">
    <property type="entry name" value="Kinase-like_dom_sf"/>
</dbReference>
<dbReference type="InterPro" id="IPR050249">
    <property type="entry name" value="Pseudomonas-type_ThrB"/>
</dbReference>
<dbReference type="NCBIfam" id="NF003558">
    <property type="entry name" value="PRK05231.1"/>
    <property type="match status" value="1"/>
</dbReference>
<dbReference type="NCBIfam" id="TIGR00938">
    <property type="entry name" value="thrB_alt"/>
    <property type="match status" value="1"/>
</dbReference>
<dbReference type="PANTHER" id="PTHR21064:SF6">
    <property type="entry name" value="AMINOGLYCOSIDE PHOSPHOTRANSFERASE DOMAIN-CONTAINING PROTEIN"/>
    <property type="match status" value="1"/>
</dbReference>
<dbReference type="PANTHER" id="PTHR21064">
    <property type="entry name" value="AMINOGLYCOSIDE PHOSPHOTRANSFERASE DOMAIN-CONTAINING PROTEIN-RELATED"/>
    <property type="match status" value="1"/>
</dbReference>
<dbReference type="Pfam" id="PF01636">
    <property type="entry name" value="APH"/>
    <property type="match status" value="1"/>
</dbReference>
<dbReference type="SUPFAM" id="SSF56112">
    <property type="entry name" value="Protein kinase-like (PK-like)"/>
    <property type="match status" value="1"/>
</dbReference>
<feature type="chain" id="PRO_1000071978" description="Homoserine kinase">
    <location>
        <begin position="1"/>
        <end position="321"/>
    </location>
</feature>
<evidence type="ECO:0000255" key="1">
    <source>
        <dbReference type="HAMAP-Rule" id="MF_00301"/>
    </source>
</evidence>
<organism>
    <name type="scientific">Azorhizobium caulinodans (strain ATCC 43989 / DSM 5975 / JCM 20966 / LMG 6465 / NBRC 14845 / NCIMB 13405 / ORS 571)</name>
    <dbReference type="NCBI Taxonomy" id="438753"/>
    <lineage>
        <taxon>Bacteria</taxon>
        <taxon>Pseudomonadati</taxon>
        <taxon>Pseudomonadota</taxon>
        <taxon>Alphaproteobacteria</taxon>
        <taxon>Hyphomicrobiales</taxon>
        <taxon>Xanthobacteraceae</taxon>
        <taxon>Azorhizobium</taxon>
    </lineage>
</organism>
<comment type="catalytic activity">
    <reaction evidence="1">
        <text>L-homoserine + ATP = O-phospho-L-homoserine + ADP + H(+)</text>
        <dbReference type="Rhea" id="RHEA:13985"/>
        <dbReference type="ChEBI" id="CHEBI:15378"/>
        <dbReference type="ChEBI" id="CHEBI:30616"/>
        <dbReference type="ChEBI" id="CHEBI:57476"/>
        <dbReference type="ChEBI" id="CHEBI:57590"/>
        <dbReference type="ChEBI" id="CHEBI:456216"/>
        <dbReference type="EC" id="2.7.1.39"/>
    </reaction>
</comment>
<comment type="pathway">
    <text evidence="1">Amino-acid biosynthesis; L-threonine biosynthesis; L-threonine from L-aspartate: step 4/5.</text>
</comment>
<comment type="similarity">
    <text evidence="1">Belongs to the pseudomonas-type ThrB family.</text>
</comment>
<name>KHSE_AZOC5</name>
<proteinExistence type="inferred from homology"/>